<dbReference type="EC" id="1.2.1.70" evidence="1"/>
<dbReference type="EMBL" id="BA000039">
    <property type="protein sequence ID" value="BAC09290.1"/>
    <property type="molecule type" value="Genomic_DNA"/>
</dbReference>
<dbReference type="RefSeq" id="NP_682528.1">
    <property type="nucleotide sequence ID" value="NC_004113.1"/>
</dbReference>
<dbReference type="RefSeq" id="WP_011057575.1">
    <property type="nucleotide sequence ID" value="NC_004113.1"/>
</dbReference>
<dbReference type="SMR" id="Q8DI53"/>
<dbReference type="STRING" id="197221.gene:10748342"/>
<dbReference type="EnsemblBacteria" id="BAC09290">
    <property type="protein sequence ID" value="BAC09290"/>
    <property type="gene ID" value="BAC09290"/>
</dbReference>
<dbReference type="KEGG" id="tel:tll1738"/>
<dbReference type="PATRIC" id="fig|197221.4.peg.1819"/>
<dbReference type="eggNOG" id="COG0373">
    <property type="taxonomic scope" value="Bacteria"/>
</dbReference>
<dbReference type="UniPathway" id="UPA00251">
    <property type="reaction ID" value="UER00316"/>
</dbReference>
<dbReference type="UniPathway" id="UPA00668"/>
<dbReference type="Proteomes" id="UP000000440">
    <property type="component" value="Chromosome"/>
</dbReference>
<dbReference type="GO" id="GO:0008883">
    <property type="term" value="F:glutamyl-tRNA reductase activity"/>
    <property type="evidence" value="ECO:0007669"/>
    <property type="project" value="UniProtKB-UniRule"/>
</dbReference>
<dbReference type="GO" id="GO:0050661">
    <property type="term" value="F:NADP binding"/>
    <property type="evidence" value="ECO:0007669"/>
    <property type="project" value="InterPro"/>
</dbReference>
<dbReference type="GO" id="GO:0015995">
    <property type="term" value="P:chlorophyll biosynthetic process"/>
    <property type="evidence" value="ECO:0007669"/>
    <property type="project" value="UniProtKB-UniRule"/>
</dbReference>
<dbReference type="GO" id="GO:0006782">
    <property type="term" value="P:protoporphyrinogen IX biosynthetic process"/>
    <property type="evidence" value="ECO:0007669"/>
    <property type="project" value="UniProtKB-UniRule"/>
</dbReference>
<dbReference type="CDD" id="cd05213">
    <property type="entry name" value="NAD_bind_Glutamyl_tRNA_reduct"/>
    <property type="match status" value="1"/>
</dbReference>
<dbReference type="FunFam" id="3.30.460.30:FF:000001">
    <property type="entry name" value="Glutamyl-tRNA reductase"/>
    <property type="match status" value="1"/>
</dbReference>
<dbReference type="FunFam" id="3.40.50.720:FF:000031">
    <property type="entry name" value="Glutamyl-tRNA reductase"/>
    <property type="match status" value="1"/>
</dbReference>
<dbReference type="Gene3D" id="3.30.460.30">
    <property type="entry name" value="Glutamyl-tRNA reductase, N-terminal domain"/>
    <property type="match status" value="1"/>
</dbReference>
<dbReference type="Gene3D" id="3.40.50.720">
    <property type="entry name" value="NAD(P)-binding Rossmann-like Domain"/>
    <property type="match status" value="1"/>
</dbReference>
<dbReference type="HAMAP" id="MF_00087">
    <property type="entry name" value="Glu_tRNA_reductase"/>
    <property type="match status" value="1"/>
</dbReference>
<dbReference type="InterPro" id="IPR000343">
    <property type="entry name" value="4pyrrol_synth_GluRdtase"/>
</dbReference>
<dbReference type="InterPro" id="IPR015896">
    <property type="entry name" value="4pyrrol_synth_GluRdtase_dimer"/>
</dbReference>
<dbReference type="InterPro" id="IPR015895">
    <property type="entry name" value="4pyrrol_synth_GluRdtase_N"/>
</dbReference>
<dbReference type="InterPro" id="IPR018214">
    <property type="entry name" value="GluRdtase_CS"/>
</dbReference>
<dbReference type="InterPro" id="IPR036453">
    <property type="entry name" value="GluRdtase_dimer_dom_sf"/>
</dbReference>
<dbReference type="InterPro" id="IPR036343">
    <property type="entry name" value="GluRdtase_N_sf"/>
</dbReference>
<dbReference type="InterPro" id="IPR036291">
    <property type="entry name" value="NAD(P)-bd_dom_sf"/>
</dbReference>
<dbReference type="InterPro" id="IPR006151">
    <property type="entry name" value="Shikm_DH/Glu-tRNA_Rdtase"/>
</dbReference>
<dbReference type="NCBIfam" id="TIGR01035">
    <property type="entry name" value="hemA"/>
    <property type="match status" value="1"/>
</dbReference>
<dbReference type="NCBIfam" id="NF000744">
    <property type="entry name" value="PRK00045.1-3"/>
    <property type="match status" value="1"/>
</dbReference>
<dbReference type="PANTHER" id="PTHR43120">
    <property type="entry name" value="GLUTAMYL-TRNA REDUCTASE 1, CHLOROPLASTIC"/>
    <property type="match status" value="1"/>
</dbReference>
<dbReference type="PANTHER" id="PTHR43120:SF1">
    <property type="entry name" value="GLUTAMYL-TRNA REDUCTASE 1, CHLOROPLASTIC"/>
    <property type="match status" value="1"/>
</dbReference>
<dbReference type="Pfam" id="PF00745">
    <property type="entry name" value="GlutR_dimer"/>
    <property type="match status" value="1"/>
</dbReference>
<dbReference type="Pfam" id="PF05201">
    <property type="entry name" value="GlutR_N"/>
    <property type="match status" value="1"/>
</dbReference>
<dbReference type="Pfam" id="PF01488">
    <property type="entry name" value="Shikimate_DH"/>
    <property type="match status" value="1"/>
</dbReference>
<dbReference type="PIRSF" id="PIRSF000445">
    <property type="entry name" value="4pyrrol_synth_GluRdtase"/>
    <property type="match status" value="1"/>
</dbReference>
<dbReference type="SUPFAM" id="SSF69742">
    <property type="entry name" value="Glutamyl tRNA-reductase catalytic, N-terminal domain"/>
    <property type="match status" value="1"/>
</dbReference>
<dbReference type="SUPFAM" id="SSF69075">
    <property type="entry name" value="Glutamyl tRNA-reductase dimerization domain"/>
    <property type="match status" value="1"/>
</dbReference>
<dbReference type="SUPFAM" id="SSF51735">
    <property type="entry name" value="NAD(P)-binding Rossmann-fold domains"/>
    <property type="match status" value="1"/>
</dbReference>
<dbReference type="PROSITE" id="PS00747">
    <property type="entry name" value="GLUTR"/>
    <property type="match status" value="1"/>
</dbReference>
<protein>
    <recommendedName>
        <fullName evidence="1">Glutamyl-tRNA reductase</fullName>
        <shortName evidence="1">GluTR</shortName>
        <ecNumber evidence="1">1.2.1.70</ecNumber>
    </recommendedName>
</protein>
<name>HEM1_THEVB</name>
<gene>
    <name evidence="1" type="primary">hemA</name>
    <name type="ordered locus">tll1738</name>
</gene>
<organism>
    <name type="scientific">Thermosynechococcus vestitus (strain NIES-2133 / IAM M-273 / BP-1)</name>
    <dbReference type="NCBI Taxonomy" id="197221"/>
    <lineage>
        <taxon>Bacteria</taxon>
        <taxon>Bacillati</taxon>
        <taxon>Cyanobacteriota</taxon>
        <taxon>Cyanophyceae</taxon>
        <taxon>Acaryochloridales</taxon>
        <taxon>Thermosynechococcaceae</taxon>
        <taxon>Thermosynechococcus</taxon>
    </lineage>
</organism>
<reference key="1">
    <citation type="journal article" date="2002" name="DNA Res.">
        <title>Complete genome structure of the thermophilic cyanobacterium Thermosynechococcus elongatus BP-1.</title>
        <authorList>
            <person name="Nakamura Y."/>
            <person name="Kaneko T."/>
            <person name="Sato S."/>
            <person name="Ikeuchi M."/>
            <person name="Katoh H."/>
            <person name="Sasamoto S."/>
            <person name="Watanabe A."/>
            <person name="Iriguchi M."/>
            <person name="Kawashima K."/>
            <person name="Kimura T."/>
            <person name="Kishida Y."/>
            <person name="Kiyokawa C."/>
            <person name="Kohara M."/>
            <person name="Matsumoto M."/>
            <person name="Matsuno A."/>
            <person name="Nakazaki N."/>
            <person name="Shimpo S."/>
            <person name="Sugimoto M."/>
            <person name="Takeuchi C."/>
            <person name="Yamada M."/>
            <person name="Tabata S."/>
        </authorList>
    </citation>
    <scope>NUCLEOTIDE SEQUENCE [LARGE SCALE GENOMIC DNA]</scope>
    <source>
        <strain>NIES-2133 / IAM M-273 / BP-1</strain>
    </source>
</reference>
<proteinExistence type="inferred from homology"/>
<evidence type="ECO:0000255" key="1">
    <source>
        <dbReference type="HAMAP-Rule" id="MF_00087"/>
    </source>
</evidence>
<sequence>MNIAVIGLSHKTAPVDVREKLSVPEDVRERALQHLCGYAHIQEATILSTCNRLEIYIVTSDTEVGVREVHQFLSEWSHIPLPQLRPYLFILLHQDAVMHLMRVASGLDSLVIGEGQILSQVKRCHQLGQQYKSIGPILNRVFTGAIAAGKRVRTETSIGTGAVSISSAAVELADLRLQNLQNCRIAVVGAGKMSRLVVQHLIARGVKEIRIINRSLERAQELAQQFPEVRFELFTMTDLLPIVAAMDLVFTSTAATEPLLDRDNLGAVLVGDRSLAIIDISVPRNVHANVTELGTVQLFNVDDLQAVVAQNQEARRQLAQEAEGILEEELETFLAWWHALETVPIIRSLRQKMEAIRTQELEKALSRLGSEFADKHQGVIEAMTRTIINKILHDPTVQLQSQRDLESRQRAMQTLQDLFNLEPIEA</sequence>
<comment type="function">
    <text evidence="1">Catalyzes the NADPH-dependent reduction of glutamyl-tRNA(Glu) to glutamate 1-semialdehyde (GSA).</text>
</comment>
<comment type="catalytic activity">
    <reaction evidence="1">
        <text>(S)-4-amino-5-oxopentanoate + tRNA(Glu) + NADP(+) = L-glutamyl-tRNA(Glu) + NADPH + H(+)</text>
        <dbReference type="Rhea" id="RHEA:12344"/>
        <dbReference type="Rhea" id="RHEA-COMP:9663"/>
        <dbReference type="Rhea" id="RHEA-COMP:9680"/>
        <dbReference type="ChEBI" id="CHEBI:15378"/>
        <dbReference type="ChEBI" id="CHEBI:57501"/>
        <dbReference type="ChEBI" id="CHEBI:57783"/>
        <dbReference type="ChEBI" id="CHEBI:58349"/>
        <dbReference type="ChEBI" id="CHEBI:78442"/>
        <dbReference type="ChEBI" id="CHEBI:78520"/>
        <dbReference type="EC" id="1.2.1.70"/>
    </reaction>
</comment>
<comment type="pathway">
    <text evidence="1">Porphyrin-containing compound metabolism; protoporphyrin-IX biosynthesis; 5-aminolevulinate from L-glutamyl-tRNA(Glu): step 1/2.</text>
</comment>
<comment type="pathway">
    <text evidence="1">Porphyrin-containing compound metabolism; chlorophyll biosynthesis.</text>
</comment>
<comment type="subunit">
    <text evidence="1">Homodimer.</text>
</comment>
<comment type="domain">
    <text evidence="1">Possesses an unusual extended V-shaped dimeric structure with each monomer consisting of three distinct domains arranged along a curved 'spinal' alpha-helix. The N-terminal catalytic domain specifically recognizes the glutamate moiety of the substrate. The second domain is the NADPH-binding domain, and the third C-terminal domain is responsible for dimerization.</text>
</comment>
<comment type="miscellaneous">
    <text evidence="1">During catalysis, the active site Cys acts as a nucleophile attacking the alpha-carbonyl group of tRNA-bound glutamate with the formation of a thioester intermediate between enzyme and glutamate, and the concomitant release of tRNA(Glu). The thioester intermediate is finally reduced by direct hydride transfer from NADPH, to form the product GSA.</text>
</comment>
<comment type="similarity">
    <text evidence="1">Belongs to the glutamyl-tRNA reductase family.</text>
</comment>
<accession>Q8DI53</accession>
<feature type="chain" id="PRO_0000114077" description="Glutamyl-tRNA reductase">
    <location>
        <begin position="1"/>
        <end position="426"/>
    </location>
</feature>
<feature type="active site" description="Nucleophile" evidence="1">
    <location>
        <position position="50"/>
    </location>
</feature>
<feature type="binding site" evidence="1">
    <location>
        <begin position="49"/>
        <end position="52"/>
    </location>
    <ligand>
        <name>substrate</name>
    </ligand>
</feature>
<feature type="binding site" evidence="1">
    <location>
        <position position="109"/>
    </location>
    <ligand>
        <name>substrate</name>
    </ligand>
</feature>
<feature type="binding site" evidence="1">
    <location>
        <begin position="114"/>
        <end position="116"/>
    </location>
    <ligand>
        <name>substrate</name>
    </ligand>
</feature>
<feature type="binding site" evidence="1">
    <location>
        <position position="120"/>
    </location>
    <ligand>
        <name>substrate</name>
    </ligand>
</feature>
<feature type="binding site" evidence="1">
    <location>
        <begin position="189"/>
        <end position="194"/>
    </location>
    <ligand>
        <name>NADP(+)</name>
        <dbReference type="ChEBI" id="CHEBI:58349"/>
    </ligand>
</feature>
<feature type="site" description="Important for activity" evidence="1">
    <location>
        <position position="99"/>
    </location>
</feature>
<keyword id="KW-0149">Chlorophyll biosynthesis</keyword>
<keyword id="KW-0521">NADP</keyword>
<keyword id="KW-0560">Oxidoreductase</keyword>
<keyword id="KW-0627">Porphyrin biosynthesis</keyword>
<keyword id="KW-1185">Reference proteome</keyword>